<name>RS10_PERMH</name>
<gene>
    <name evidence="1" type="primary">rpsJ</name>
    <name type="ordered locus">PERMA_1195</name>
</gene>
<evidence type="ECO:0000255" key="1">
    <source>
        <dbReference type="HAMAP-Rule" id="MF_00508"/>
    </source>
</evidence>
<evidence type="ECO:0000305" key="2"/>
<keyword id="KW-1185">Reference proteome</keyword>
<keyword id="KW-0687">Ribonucleoprotein</keyword>
<keyword id="KW-0689">Ribosomal protein</keyword>
<feature type="chain" id="PRO_1000146070" description="Small ribosomal subunit protein uS10">
    <location>
        <begin position="1"/>
        <end position="103"/>
    </location>
</feature>
<accession>C0QQM2</accession>
<sequence length="103" mass="11849">MVQEKIRIKLKAFDHKVLDQSVKQIIDTVKRSGGVIKGPIPLPTQRKVWCVLRSPHKFEQSREHFEMRIHKRLIDIENATPQTIEALMDISLPAGVDVEIKLS</sequence>
<comment type="function">
    <text evidence="1">Involved in the binding of tRNA to the ribosomes.</text>
</comment>
<comment type="subunit">
    <text evidence="1">Part of the 30S ribosomal subunit.</text>
</comment>
<comment type="similarity">
    <text evidence="1">Belongs to the universal ribosomal protein uS10 family.</text>
</comment>
<protein>
    <recommendedName>
        <fullName evidence="1">Small ribosomal subunit protein uS10</fullName>
    </recommendedName>
    <alternativeName>
        <fullName evidence="2">30S ribosomal protein S10</fullName>
    </alternativeName>
</protein>
<dbReference type="EMBL" id="CP001230">
    <property type="protein sequence ID" value="ACO04412.1"/>
    <property type="molecule type" value="Genomic_DNA"/>
</dbReference>
<dbReference type="RefSeq" id="WP_012676650.1">
    <property type="nucleotide sequence ID" value="NC_012440.1"/>
</dbReference>
<dbReference type="SMR" id="C0QQM2"/>
<dbReference type="STRING" id="123214.PERMA_1195"/>
<dbReference type="PaxDb" id="123214-PERMA_1195"/>
<dbReference type="KEGG" id="pmx:PERMA_1195"/>
<dbReference type="eggNOG" id="COG0051">
    <property type="taxonomic scope" value="Bacteria"/>
</dbReference>
<dbReference type="HOGENOM" id="CLU_122625_1_3_0"/>
<dbReference type="OrthoDB" id="9804464at2"/>
<dbReference type="Proteomes" id="UP000001366">
    <property type="component" value="Chromosome"/>
</dbReference>
<dbReference type="GO" id="GO:1990904">
    <property type="term" value="C:ribonucleoprotein complex"/>
    <property type="evidence" value="ECO:0007669"/>
    <property type="project" value="UniProtKB-KW"/>
</dbReference>
<dbReference type="GO" id="GO:0005840">
    <property type="term" value="C:ribosome"/>
    <property type="evidence" value="ECO:0007669"/>
    <property type="project" value="UniProtKB-KW"/>
</dbReference>
<dbReference type="GO" id="GO:0003735">
    <property type="term" value="F:structural constituent of ribosome"/>
    <property type="evidence" value="ECO:0007669"/>
    <property type="project" value="InterPro"/>
</dbReference>
<dbReference type="GO" id="GO:0000049">
    <property type="term" value="F:tRNA binding"/>
    <property type="evidence" value="ECO:0007669"/>
    <property type="project" value="UniProtKB-UniRule"/>
</dbReference>
<dbReference type="GO" id="GO:0006412">
    <property type="term" value="P:translation"/>
    <property type="evidence" value="ECO:0007669"/>
    <property type="project" value="UniProtKB-UniRule"/>
</dbReference>
<dbReference type="FunFam" id="3.30.70.600:FF:000003">
    <property type="entry name" value="30S ribosomal protein S10"/>
    <property type="match status" value="1"/>
</dbReference>
<dbReference type="Gene3D" id="3.30.70.600">
    <property type="entry name" value="Ribosomal protein S10 domain"/>
    <property type="match status" value="1"/>
</dbReference>
<dbReference type="HAMAP" id="MF_00508">
    <property type="entry name" value="Ribosomal_uS10"/>
    <property type="match status" value="1"/>
</dbReference>
<dbReference type="InterPro" id="IPR001848">
    <property type="entry name" value="Ribosomal_uS10"/>
</dbReference>
<dbReference type="InterPro" id="IPR018268">
    <property type="entry name" value="Ribosomal_uS10_CS"/>
</dbReference>
<dbReference type="InterPro" id="IPR027486">
    <property type="entry name" value="Ribosomal_uS10_dom"/>
</dbReference>
<dbReference type="InterPro" id="IPR036838">
    <property type="entry name" value="Ribosomal_uS10_dom_sf"/>
</dbReference>
<dbReference type="NCBIfam" id="NF001861">
    <property type="entry name" value="PRK00596.1"/>
    <property type="match status" value="1"/>
</dbReference>
<dbReference type="NCBIfam" id="TIGR01049">
    <property type="entry name" value="rpsJ_bact"/>
    <property type="match status" value="1"/>
</dbReference>
<dbReference type="PANTHER" id="PTHR11700">
    <property type="entry name" value="30S RIBOSOMAL PROTEIN S10 FAMILY MEMBER"/>
    <property type="match status" value="1"/>
</dbReference>
<dbReference type="Pfam" id="PF00338">
    <property type="entry name" value="Ribosomal_S10"/>
    <property type="match status" value="1"/>
</dbReference>
<dbReference type="PRINTS" id="PR00971">
    <property type="entry name" value="RIBOSOMALS10"/>
</dbReference>
<dbReference type="SMART" id="SM01403">
    <property type="entry name" value="Ribosomal_S10"/>
    <property type="match status" value="1"/>
</dbReference>
<dbReference type="SUPFAM" id="SSF54999">
    <property type="entry name" value="Ribosomal protein S10"/>
    <property type="match status" value="1"/>
</dbReference>
<dbReference type="PROSITE" id="PS00361">
    <property type="entry name" value="RIBOSOMAL_S10"/>
    <property type="match status" value="1"/>
</dbReference>
<organism>
    <name type="scientific">Persephonella marina (strain DSM 14350 / EX-H1)</name>
    <dbReference type="NCBI Taxonomy" id="123214"/>
    <lineage>
        <taxon>Bacteria</taxon>
        <taxon>Pseudomonadati</taxon>
        <taxon>Aquificota</taxon>
        <taxon>Aquificia</taxon>
        <taxon>Aquificales</taxon>
        <taxon>Hydrogenothermaceae</taxon>
        <taxon>Persephonella</taxon>
    </lineage>
</organism>
<proteinExistence type="inferred from homology"/>
<reference key="1">
    <citation type="journal article" date="2009" name="J. Bacteriol.">
        <title>Complete and draft genome sequences of six members of the Aquificales.</title>
        <authorList>
            <person name="Reysenbach A.-L."/>
            <person name="Hamamura N."/>
            <person name="Podar M."/>
            <person name="Griffiths E."/>
            <person name="Ferreira S."/>
            <person name="Hochstein R."/>
            <person name="Heidelberg J."/>
            <person name="Johnson J."/>
            <person name="Mead D."/>
            <person name="Pohorille A."/>
            <person name="Sarmiento M."/>
            <person name="Schweighofer K."/>
            <person name="Seshadri R."/>
            <person name="Voytek M.A."/>
        </authorList>
    </citation>
    <scope>NUCLEOTIDE SEQUENCE [LARGE SCALE GENOMIC DNA]</scope>
    <source>
        <strain>DSM 14350 / EX-H1</strain>
    </source>
</reference>